<proteinExistence type="inferred from homology"/>
<keyword id="KW-0029">Amino-acid transport</keyword>
<keyword id="KW-0067">ATP-binding</keyword>
<keyword id="KW-0997">Cell inner membrane</keyword>
<keyword id="KW-1003">Cell membrane</keyword>
<keyword id="KW-0472">Membrane</keyword>
<keyword id="KW-0547">Nucleotide-binding</keyword>
<keyword id="KW-1278">Translocase</keyword>
<keyword id="KW-0813">Transport</keyword>
<reference key="1">
    <citation type="journal article" date="2005" name="Proc. Natl. Acad. Sci. U.S.A.">
        <title>Comparison of the complete genome sequences of Pseudomonas syringae pv. syringae B728a and pv. tomato DC3000.</title>
        <authorList>
            <person name="Feil H."/>
            <person name="Feil W.S."/>
            <person name="Chain P."/>
            <person name="Larimer F."/>
            <person name="Dibartolo G."/>
            <person name="Copeland A."/>
            <person name="Lykidis A."/>
            <person name="Trong S."/>
            <person name="Nolan M."/>
            <person name="Goltsman E."/>
            <person name="Thiel J."/>
            <person name="Malfatti S."/>
            <person name="Loper J.E."/>
            <person name="Lapidus A."/>
            <person name="Detter J.C."/>
            <person name="Land M."/>
            <person name="Richardson P.M."/>
            <person name="Kyrpides N.C."/>
            <person name="Ivanova N."/>
            <person name="Lindow S.E."/>
        </authorList>
    </citation>
    <scope>NUCLEOTIDE SEQUENCE [LARGE SCALE GENOMIC DNA]</scope>
    <source>
        <strain>B728a</strain>
    </source>
</reference>
<protein>
    <recommendedName>
        <fullName evidence="1">Methionine import ATP-binding protein MetN 2</fullName>
        <ecNumber evidence="1">7.4.2.11</ecNumber>
    </recommendedName>
</protein>
<gene>
    <name evidence="1" type="primary">metN2</name>
    <name type="ordered locus">Psyr_0350</name>
</gene>
<evidence type="ECO:0000255" key="1">
    <source>
        <dbReference type="HAMAP-Rule" id="MF_01719"/>
    </source>
</evidence>
<evidence type="ECO:0000256" key="2">
    <source>
        <dbReference type="SAM" id="MobiDB-lite"/>
    </source>
</evidence>
<sequence>MTATAQRQRPIDTTGAGQRAQQAELHPELNRAHVRFINLGKTYHGKQGPVEALGNIDLAVQHGEIFGIIGRSGAGKSSLIRTINRLEQPSNGRVLIDQVDIGEFDEDKLVELRRRIGMIFQHFNLMSAKNVWQNVELPLKVAGVPREQRARKVAQLLELVGLQDKHKAYPAQLSGGQKQRVGIARALVHDPAILLCDEATSALDPETTQSILGLLREINQRLGLTIVLITHEMAVIRDICHRVVVLEQGRIVEQGPVWQVFGDPQHEVSKTLLAPLQTGLPKEWAERLSDQPQRPDAALLLDVHFTGVSAEGPDLAALFTALGGKVELLQGGVERIQDRAIGHLILSVAGSPHSRDELLARARTLAPRAEVLGYVG</sequence>
<accession>Q4ZZK0</accession>
<feature type="chain" id="PRO_0000270357" description="Methionine import ATP-binding protein MetN 2">
    <location>
        <begin position="1"/>
        <end position="376"/>
    </location>
</feature>
<feature type="domain" description="ABC transporter" evidence="1">
    <location>
        <begin position="34"/>
        <end position="273"/>
    </location>
</feature>
<feature type="region of interest" description="Disordered" evidence="2">
    <location>
        <begin position="1"/>
        <end position="25"/>
    </location>
</feature>
<feature type="binding site" evidence="1">
    <location>
        <begin position="70"/>
        <end position="77"/>
    </location>
    <ligand>
        <name>ATP</name>
        <dbReference type="ChEBI" id="CHEBI:30616"/>
    </ligand>
</feature>
<organism>
    <name type="scientific">Pseudomonas syringae pv. syringae (strain B728a)</name>
    <dbReference type="NCBI Taxonomy" id="205918"/>
    <lineage>
        <taxon>Bacteria</taxon>
        <taxon>Pseudomonadati</taxon>
        <taxon>Pseudomonadota</taxon>
        <taxon>Gammaproteobacteria</taxon>
        <taxon>Pseudomonadales</taxon>
        <taxon>Pseudomonadaceae</taxon>
        <taxon>Pseudomonas</taxon>
        <taxon>Pseudomonas syringae</taxon>
    </lineage>
</organism>
<comment type="function">
    <text evidence="1">Part of the ABC transporter complex MetNIQ involved in methionine import. Responsible for energy coupling to the transport system.</text>
</comment>
<comment type="catalytic activity">
    <reaction evidence="1">
        <text>L-methionine(out) + ATP + H2O = L-methionine(in) + ADP + phosphate + H(+)</text>
        <dbReference type="Rhea" id="RHEA:29779"/>
        <dbReference type="ChEBI" id="CHEBI:15377"/>
        <dbReference type="ChEBI" id="CHEBI:15378"/>
        <dbReference type="ChEBI" id="CHEBI:30616"/>
        <dbReference type="ChEBI" id="CHEBI:43474"/>
        <dbReference type="ChEBI" id="CHEBI:57844"/>
        <dbReference type="ChEBI" id="CHEBI:456216"/>
        <dbReference type="EC" id="7.4.2.11"/>
    </reaction>
</comment>
<comment type="catalytic activity">
    <reaction evidence="1">
        <text>D-methionine(out) + ATP + H2O = D-methionine(in) + ADP + phosphate + H(+)</text>
        <dbReference type="Rhea" id="RHEA:29767"/>
        <dbReference type="ChEBI" id="CHEBI:15377"/>
        <dbReference type="ChEBI" id="CHEBI:15378"/>
        <dbReference type="ChEBI" id="CHEBI:30616"/>
        <dbReference type="ChEBI" id="CHEBI:43474"/>
        <dbReference type="ChEBI" id="CHEBI:57932"/>
        <dbReference type="ChEBI" id="CHEBI:456216"/>
        <dbReference type="EC" id="7.4.2.11"/>
    </reaction>
</comment>
<comment type="subunit">
    <text evidence="1">The complex is composed of two ATP-binding proteins (MetN), two transmembrane proteins (MetI) and a solute-binding protein (MetQ).</text>
</comment>
<comment type="subcellular location">
    <subcellularLocation>
        <location evidence="1">Cell inner membrane</location>
        <topology evidence="1">Peripheral membrane protein</topology>
    </subcellularLocation>
</comment>
<comment type="similarity">
    <text evidence="1">Belongs to the ABC transporter superfamily. Methionine importer (TC 3.A.1.24) family.</text>
</comment>
<name>METN2_PSEU2</name>
<dbReference type="EC" id="7.4.2.11" evidence="1"/>
<dbReference type="EMBL" id="CP000075">
    <property type="protein sequence ID" value="AAY35422.1"/>
    <property type="molecule type" value="Genomic_DNA"/>
</dbReference>
<dbReference type="RefSeq" id="WP_011266342.1">
    <property type="nucleotide sequence ID" value="NC_007005.1"/>
</dbReference>
<dbReference type="RefSeq" id="YP_233460.1">
    <property type="nucleotide sequence ID" value="NC_007005.1"/>
</dbReference>
<dbReference type="SMR" id="Q4ZZK0"/>
<dbReference type="STRING" id="205918.Psyr_0350"/>
<dbReference type="KEGG" id="psb:Psyr_0350"/>
<dbReference type="PATRIC" id="fig|205918.7.peg.356"/>
<dbReference type="eggNOG" id="COG1135">
    <property type="taxonomic scope" value="Bacteria"/>
</dbReference>
<dbReference type="HOGENOM" id="CLU_000604_1_3_6"/>
<dbReference type="OrthoDB" id="9802264at2"/>
<dbReference type="Proteomes" id="UP000000426">
    <property type="component" value="Chromosome"/>
</dbReference>
<dbReference type="GO" id="GO:0005886">
    <property type="term" value="C:plasma membrane"/>
    <property type="evidence" value="ECO:0007669"/>
    <property type="project" value="UniProtKB-SubCell"/>
</dbReference>
<dbReference type="GO" id="GO:0033232">
    <property type="term" value="F:ABC-type D-methionine transporter activity"/>
    <property type="evidence" value="ECO:0007669"/>
    <property type="project" value="UniProtKB-EC"/>
</dbReference>
<dbReference type="GO" id="GO:0005524">
    <property type="term" value="F:ATP binding"/>
    <property type="evidence" value="ECO:0007669"/>
    <property type="project" value="UniProtKB-KW"/>
</dbReference>
<dbReference type="GO" id="GO:0016887">
    <property type="term" value="F:ATP hydrolysis activity"/>
    <property type="evidence" value="ECO:0007669"/>
    <property type="project" value="InterPro"/>
</dbReference>
<dbReference type="CDD" id="cd03258">
    <property type="entry name" value="ABC_MetN_methionine_transporter"/>
    <property type="match status" value="1"/>
</dbReference>
<dbReference type="FunFam" id="3.40.50.300:FF:001755">
    <property type="entry name" value="Methionine import ATP-binding protein MetN"/>
    <property type="match status" value="1"/>
</dbReference>
<dbReference type="Gene3D" id="3.30.70.260">
    <property type="match status" value="1"/>
</dbReference>
<dbReference type="Gene3D" id="3.40.50.300">
    <property type="entry name" value="P-loop containing nucleotide triphosphate hydrolases"/>
    <property type="match status" value="1"/>
</dbReference>
<dbReference type="InterPro" id="IPR003593">
    <property type="entry name" value="AAA+_ATPase"/>
</dbReference>
<dbReference type="InterPro" id="IPR003439">
    <property type="entry name" value="ABC_transporter-like_ATP-bd"/>
</dbReference>
<dbReference type="InterPro" id="IPR017871">
    <property type="entry name" value="ABC_transporter-like_CS"/>
</dbReference>
<dbReference type="InterPro" id="IPR045865">
    <property type="entry name" value="ACT-like_dom_sf"/>
</dbReference>
<dbReference type="InterPro" id="IPR041701">
    <property type="entry name" value="MetN_ABC"/>
</dbReference>
<dbReference type="InterPro" id="IPR050086">
    <property type="entry name" value="MetN_ABC_transporter-like"/>
</dbReference>
<dbReference type="InterPro" id="IPR018449">
    <property type="entry name" value="NIL_domain"/>
</dbReference>
<dbReference type="InterPro" id="IPR027417">
    <property type="entry name" value="P-loop_NTPase"/>
</dbReference>
<dbReference type="PANTHER" id="PTHR43166">
    <property type="entry name" value="AMINO ACID IMPORT ATP-BINDING PROTEIN"/>
    <property type="match status" value="1"/>
</dbReference>
<dbReference type="PANTHER" id="PTHR43166:SF30">
    <property type="entry name" value="METHIONINE IMPORT ATP-BINDING PROTEIN METN"/>
    <property type="match status" value="1"/>
</dbReference>
<dbReference type="Pfam" id="PF00005">
    <property type="entry name" value="ABC_tran"/>
    <property type="match status" value="1"/>
</dbReference>
<dbReference type="Pfam" id="PF09383">
    <property type="entry name" value="NIL"/>
    <property type="match status" value="1"/>
</dbReference>
<dbReference type="SMART" id="SM00382">
    <property type="entry name" value="AAA"/>
    <property type="match status" value="1"/>
</dbReference>
<dbReference type="SMART" id="SM00930">
    <property type="entry name" value="NIL"/>
    <property type="match status" value="1"/>
</dbReference>
<dbReference type="SUPFAM" id="SSF55021">
    <property type="entry name" value="ACT-like"/>
    <property type="match status" value="1"/>
</dbReference>
<dbReference type="SUPFAM" id="SSF52540">
    <property type="entry name" value="P-loop containing nucleoside triphosphate hydrolases"/>
    <property type="match status" value="1"/>
</dbReference>
<dbReference type="PROSITE" id="PS00211">
    <property type="entry name" value="ABC_TRANSPORTER_1"/>
    <property type="match status" value="1"/>
</dbReference>
<dbReference type="PROSITE" id="PS50893">
    <property type="entry name" value="ABC_TRANSPORTER_2"/>
    <property type="match status" value="1"/>
</dbReference>
<dbReference type="PROSITE" id="PS51264">
    <property type="entry name" value="METN"/>
    <property type="match status" value="1"/>
</dbReference>